<accession>Q034Z8</accession>
<evidence type="ECO:0000255" key="1">
    <source>
        <dbReference type="HAMAP-Rule" id="MF_01365"/>
    </source>
</evidence>
<evidence type="ECO:0000305" key="2"/>
<keyword id="KW-1185">Reference proteome</keyword>
<keyword id="KW-0687">Ribonucleoprotein</keyword>
<keyword id="KW-0689">Ribosomal protein</keyword>
<keyword id="KW-0694">RNA-binding</keyword>
<keyword id="KW-0699">rRNA-binding</keyword>
<dbReference type="EMBL" id="CP000423">
    <property type="protein sequence ID" value="ABJ71224.1"/>
    <property type="molecule type" value="Genomic_DNA"/>
</dbReference>
<dbReference type="RefSeq" id="WP_003567536.1">
    <property type="nucleotide sequence ID" value="NC_008526.1"/>
</dbReference>
<dbReference type="RefSeq" id="YP_807666.1">
    <property type="nucleotide sequence ID" value="NC_008526.1"/>
</dbReference>
<dbReference type="SMR" id="Q034Z8"/>
<dbReference type="STRING" id="321967.LSEI_2488"/>
<dbReference type="PaxDb" id="321967-LSEI_2488"/>
<dbReference type="GeneID" id="57091068"/>
<dbReference type="KEGG" id="lca:LSEI_2488"/>
<dbReference type="PATRIC" id="fig|321967.11.peg.2442"/>
<dbReference type="HOGENOM" id="CLU_065464_1_2_9"/>
<dbReference type="Proteomes" id="UP000001651">
    <property type="component" value="Chromosome"/>
</dbReference>
<dbReference type="GO" id="GO:0022625">
    <property type="term" value="C:cytosolic large ribosomal subunit"/>
    <property type="evidence" value="ECO:0007669"/>
    <property type="project" value="TreeGrafter"/>
</dbReference>
<dbReference type="GO" id="GO:0019843">
    <property type="term" value="F:rRNA binding"/>
    <property type="evidence" value="ECO:0007669"/>
    <property type="project" value="UniProtKB-UniRule"/>
</dbReference>
<dbReference type="GO" id="GO:0003735">
    <property type="term" value="F:structural constituent of ribosome"/>
    <property type="evidence" value="ECO:0007669"/>
    <property type="project" value="InterPro"/>
</dbReference>
<dbReference type="GO" id="GO:0002181">
    <property type="term" value="P:cytoplasmic translation"/>
    <property type="evidence" value="ECO:0007669"/>
    <property type="project" value="TreeGrafter"/>
</dbReference>
<dbReference type="FunFam" id="3.90.930.12:FF:000001">
    <property type="entry name" value="50S ribosomal protein L6"/>
    <property type="match status" value="1"/>
</dbReference>
<dbReference type="FunFam" id="3.90.930.12:FF:000002">
    <property type="entry name" value="50S ribosomal protein L6"/>
    <property type="match status" value="1"/>
</dbReference>
<dbReference type="Gene3D" id="3.90.930.12">
    <property type="entry name" value="Ribosomal protein L6, alpha-beta domain"/>
    <property type="match status" value="2"/>
</dbReference>
<dbReference type="HAMAP" id="MF_01365_B">
    <property type="entry name" value="Ribosomal_uL6_B"/>
    <property type="match status" value="1"/>
</dbReference>
<dbReference type="InterPro" id="IPR000702">
    <property type="entry name" value="Ribosomal_uL6-like"/>
</dbReference>
<dbReference type="InterPro" id="IPR036789">
    <property type="entry name" value="Ribosomal_uL6-like_a/b-dom_sf"/>
</dbReference>
<dbReference type="InterPro" id="IPR020040">
    <property type="entry name" value="Ribosomal_uL6_a/b-dom"/>
</dbReference>
<dbReference type="InterPro" id="IPR019906">
    <property type="entry name" value="Ribosomal_uL6_bac-type"/>
</dbReference>
<dbReference type="InterPro" id="IPR002358">
    <property type="entry name" value="Ribosomal_uL6_CS"/>
</dbReference>
<dbReference type="NCBIfam" id="TIGR03654">
    <property type="entry name" value="L6_bact"/>
    <property type="match status" value="1"/>
</dbReference>
<dbReference type="PANTHER" id="PTHR11655">
    <property type="entry name" value="60S/50S RIBOSOMAL PROTEIN L6/L9"/>
    <property type="match status" value="1"/>
</dbReference>
<dbReference type="PANTHER" id="PTHR11655:SF14">
    <property type="entry name" value="LARGE RIBOSOMAL SUBUNIT PROTEIN UL6M"/>
    <property type="match status" value="1"/>
</dbReference>
<dbReference type="Pfam" id="PF00347">
    <property type="entry name" value="Ribosomal_L6"/>
    <property type="match status" value="2"/>
</dbReference>
<dbReference type="PIRSF" id="PIRSF002162">
    <property type="entry name" value="Ribosomal_L6"/>
    <property type="match status" value="1"/>
</dbReference>
<dbReference type="PRINTS" id="PR00059">
    <property type="entry name" value="RIBOSOMALL6"/>
</dbReference>
<dbReference type="SUPFAM" id="SSF56053">
    <property type="entry name" value="Ribosomal protein L6"/>
    <property type="match status" value="2"/>
</dbReference>
<dbReference type="PROSITE" id="PS00525">
    <property type="entry name" value="RIBOSOMAL_L6_1"/>
    <property type="match status" value="1"/>
</dbReference>
<protein>
    <recommendedName>
        <fullName evidence="1">Large ribosomal subunit protein uL6</fullName>
    </recommendedName>
    <alternativeName>
        <fullName evidence="2">50S ribosomal protein L6</fullName>
    </alternativeName>
</protein>
<sequence length="176" mass="19334">MSRIGYKVIKVPAGVTITKDGDNITVKGPKGELTRHFAPEIEMHQEGDEINFTRPDDSYKAVHGTMRANLNNMVVGVTEGYKKEMKLVGVGYRAQKQGEKLVLNVGYSHPVEMTAPKGVTVEVPSTTQIIISGISKQVVGQFAAVVRSVRAPEPYKGKGIRYVDEHVRRKEGKTGK</sequence>
<comment type="function">
    <text evidence="1">This protein binds to the 23S rRNA, and is important in its secondary structure. It is located near the subunit interface in the base of the L7/L12 stalk, and near the tRNA binding site of the peptidyltransferase center.</text>
</comment>
<comment type="subunit">
    <text evidence="1">Part of the 50S ribosomal subunit.</text>
</comment>
<comment type="similarity">
    <text evidence="1">Belongs to the universal ribosomal protein uL6 family.</text>
</comment>
<proteinExistence type="inferred from homology"/>
<feature type="chain" id="PRO_1000055246" description="Large ribosomal subunit protein uL6">
    <location>
        <begin position="1"/>
        <end position="176"/>
    </location>
</feature>
<organism>
    <name type="scientific">Lacticaseibacillus paracasei (strain ATCC 334 / BCRC 17002 / CCUG 31169 / CIP 107868 / KCTC 3260 / NRRL B-441)</name>
    <name type="common">Lactobacillus paracasei</name>
    <dbReference type="NCBI Taxonomy" id="321967"/>
    <lineage>
        <taxon>Bacteria</taxon>
        <taxon>Bacillati</taxon>
        <taxon>Bacillota</taxon>
        <taxon>Bacilli</taxon>
        <taxon>Lactobacillales</taxon>
        <taxon>Lactobacillaceae</taxon>
        <taxon>Lacticaseibacillus</taxon>
    </lineage>
</organism>
<name>RL6_LACP3</name>
<gene>
    <name evidence="1" type="primary">rplF</name>
    <name type="ordered locus">LSEI_2488</name>
</gene>
<reference key="1">
    <citation type="journal article" date="2006" name="Proc. Natl. Acad. Sci. U.S.A.">
        <title>Comparative genomics of the lactic acid bacteria.</title>
        <authorList>
            <person name="Makarova K.S."/>
            <person name="Slesarev A."/>
            <person name="Wolf Y.I."/>
            <person name="Sorokin A."/>
            <person name="Mirkin B."/>
            <person name="Koonin E.V."/>
            <person name="Pavlov A."/>
            <person name="Pavlova N."/>
            <person name="Karamychev V."/>
            <person name="Polouchine N."/>
            <person name="Shakhova V."/>
            <person name="Grigoriev I."/>
            <person name="Lou Y."/>
            <person name="Rohksar D."/>
            <person name="Lucas S."/>
            <person name="Huang K."/>
            <person name="Goodstein D.M."/>
            <person name="Hawkins T."/>
            <person name="Plengvidhya V."/>
            <person name="Welker D."/>
            <person name="Hughes J."/>
            <person name="Goh Y."/>
            <person name="Benson A."/>
            <person name="Baldwin K."/>
            <person name="Lee J.-H."/>
            <person name="Diaz-Muniz I."/>
            <person name="Dosti B."/>
            <person name="Smeianov V."/>
            <person name="Wechter W."/>
            <person name="Barabote R."/>
            <person name="Lorca G."/>
            <person name="Altermann E."/>
            <person name="Barrangou R."/>
            <person name="Ganesan B."/>
            <person name="Xie Y."/>
            <person name="Rawsthorne H."/>
            <person name="Tamir D."/>
            <person name="Parker C."/>
            <person name="Breidt F."/>
            <person name="Broadbent J.R."/>
            <person name="Hutkins R."/>
            <person name="O'Sullivan D."/>
            <person name="Steele J."/>
            <person name="Unlu G."/>
            <person name="Saier M.H. Jr."/>
            <person name="Klaenhammer T."/>
            <person name="Richardson P."/>
            <person name="Kozyavkin S."/>
            <person name="Weimer B.C."/>
            <person name="Mills D.A."/>
        </authorList>
    </citation>
    <scope>NUCLEOTIDE SEQUENCE [LARGE SCALE GENOMIC DNA]</scope>
    <source>
        <strain>ATCC 334 / BCRC 17002 / CCUG 31169 / CIP 107868 / KCTC 3260 / NRRL B-441</strain>
    </source>
</reference>